<accession>Q9M8J2</accession>
<accession>Q8GX53</accession>
<feature type="chain" id="PRO_0000392606" description="Probable galacturonosyltransferase-like 4">
    <location>
        <begin position="1"/>
        <end position="351"/>
    </location>
</feature>
<feature type="topological domain" description="Cytoplasmic" evidence="2">
    <location>
        <begin position="1"/>
        <end position="8"/>
    </location>
</feature>
<feature type="transmembrane region" description="Helical; Signal-anchor for type II membrane protein" evidence="2">
    <location>
        <begin position="9"/>
        <end position="29"/>
    </location>
</feature>
<feature type="topological domain" description="Lumenal" evidence="2">
    <location>
        <begin position="30"/>
        <end position="351"/>
    </location>
</feature>
<feature type="glycosylation site" description="N-linked (GlcNAc...) asparagine" evidence="2">
    <location>
        <position position="96"/>
    </location>
</feature>
<feature type="glycosylation site" description="N-linked (GlcNAc...) asparagine" evidence="2">
    <location>
        <position position="203"/>
    </location>
</feature>
<proteinExistence type="evidence at transcript level"/>
<protein>
    <recommendedName>
        <fullName>Probable galacturonosyltransferase-like 4</fullName>
        <ecNumber>2.4.1.-</ecNumber>
    </recommendedName>
    <alternativeName>
        <fullName>Galactinol synthase 9</fullName>
        <shortName>AtGolS9</shortName>
        <shortName>GolS-9</shortName>
    </alternativeName>
</protein>
<reference key="1">
    <citation type="journal article" date="2000" name="Nature">
        <title>Sequence and analysis of chromosome 3 of the plant Arabidopsis thaliana.</title>
        <authorList>
            <person name="Salanoubat M."/>
            <person name="Lemcke K."/>
            <person name="Rieger M."/>
            <person name="Ansorge W."/>
            <person name="Unseld M."/>
            <person name="Fartmann B."/>
            <person name="Valle G."/>
            <person name="Bloecker H."/>
            <person name="Perez-Alonso M."/>
            <person name="Obermaier B."/>
            <person name="Delseny M."/>
            <person name="Boutry M."/>
            <person name="Grivell L.A."/>
            <person name="Mache R."/>
            <person name="Puigdomenech P."/>
            <person name="De Simone V."/>
            <person name="Choisne N."/>
            <person name="Artiguenave F."/>
            <person name="Robert C."/>
            <person name="Brottier P."/>
            <person name="Wincker P."/>
            <person name="Cattolico L."/>
            <person name="Weissenbach J."/>
            <person name="Saurin W."/>
            <person name="Quetier F."/>
            <person name="Schaefer M."/>
            <person name="Mueller-Auer S."/>
            <person name="Gabel C."/>
            <person name="Fuchs M."/>
            <person name="Benes V."/>
            <person name="Wurmbach E."/>
            <person name="Drzonek H."/>
            <person name="Erfle H."/>
            <person name="Jordan N."/>
            <person name="Bangert S."/>
            <person name="Wiedelmann R."/>
            <person name="Kranz H."/>
            <person name="Voss H."/>
            <person name="Holland R."/>
            <person name="Brandt P."/>
            <person name="Nyakatura G."/>
            <person name="Vezzi A."/>
            <person name="D'Angelo M."/>
            <person name="Pallavicini A."/>
            <person name="Toppo S."/>
            <person name="Simionati B."/>
            <person name="Conrad A."/>
            <person name="Hornischer K."/>
            <person name="Kauer G."/>
            <person name="Loehnert T.-H."/>
            <person name="Nordsiek G."/>
            <person name="Reichelt J."/>
            <person name="Scharfe M."/>
            <person name="Schoen O."/>
            <person name="Bargues M."/>
            <person name="Terol J."/>
            <person name="Climent J."/>
            <person name="Navarro P."/>
            <person name="Collado C."/>
            <person name="Perez-Perez A."/>
            <person name="Ottenwaelder B."/>
            <person name="Duchemin D."/>
            <person name="Cooke R."/>
            <person name="Laudie M."/>
            <person name="Berger-Llauro C."/>
            <person name="Purnelle B."/>
            <person name="Masuy D."/>
            <person name="de Haan M."/>
            <person name="Maarse A.C."/>
            <person name="Alcaraz J.-P."/>
            <person name="Cottet A."/>
            <person name="Casacuberta E."/>
            <person name="Monfort A."/>
            <person name="Argiriou A."/>
            <person name="Flores M."/>
            <person name="Liguori R."/>
            <person name="Vitale D."/>
            <person name="Mannhaupt G."/>
            <person name="Haase D."/>
            <person name="Schoof H."/>
            <person name="Rudd S."/>
            <person name="Zaccaria P."/>
            <person name="Mewes H.-W."/>
            <person name="Mayer K.F.X."/>
            <person name="Kaul S."/>
            <person name="Town C.D."/>
            <person name="Koo H.L."/>
            <person name="Tallon L.J."/>
            <person name="Jenkins J."/>
            <person name="Rooney T."/>
            <person name="Rizzo M."/>
            <person name="Walts A."/>
            <person name="Utterback T."/>
            <person name="Fujii C.Y."/>
            <person name="Shea T.P."/>
            <person name="Creasy T.H."/>
            <person name="Haas B."/>
            <person name="Maiti R."/>
            <person name="Wu D."/>
            <person name="Peterson J."/>
            <person name="Van Aken S."/>
            <person name="Pai G."/>
            <person name="Militscher J."/>
            <person name="Sellers P."/>
            <person name="Gill J.E."/>
            <person name="Feldblyum T.V."/>
            <person name="Preuss D."/>
            <person name="Lin X."/>
            <person name="Nierman W.C."/>
            <person name="Salzberg S.L."/>
            <person name="White O."/>
            <person name="Venter J.C."/>
            <person name="Fraser C.M."/>
            <person name="Kaneko T."/>
            <person name="Nakamura Y."/>
            <person name="Sato S."/>
            <person name="Kato T."/>
            <person name="Asamizu E."/>
            <person name="Sasamoto S."/>
            <person name="Kimura T."/>
            <person name="Idesawa K."/>
            <person name="Kawashima K."/>
            <person name="Kishida Y."/>
            <person name="Kiyokawa C."/>
            <person name="Kohara M."/>
            <person name="Matsumoto M."/>
            <person name="Matsuno A."/>
            <person name="Muraki A."/>
            <person name="Nakayama S."/>
            <person name="Nakazaki N."/>
            <person name="Shinpo S."/>
            <person name="Takeuchi C."/>
            <person name="Wada T."/>
            <person name="Watanabe A."/>
            <person name="Yamada M."/>
            <person name="Yasuda M."/>
            <person name="Tabata S."/>
        </authorList>
    </citation>
    <scope>NUCLEOTIDE SEQUENCE [LARGE SCALE GENOMIC DNA]</scope>
    <source>
        <strain>cv. Columbia</strain>
    </source>
</reference>
<reference key="2">
    <citation type="journal article" date="2017" name="Plant J.">
        <title>Araport11: a complete reannotation of the Arabidopsis thaliana reference genome.</title>
        <authorList>
            <person name="Cheng C.Y."/>
            <person name="Krishnakumar V."/>
            <person name="Chan A.P."/>
            <person name="Thibaud-Nissen F."/>
            <person name="Schobel S."/>
            <person name="Town C.D."/>
        </authorList>
    </citation>
    <scope>GENOME REANNOTATION</scope>
    <source>
        <strain>cv. Columbia</strain>
    </source>
</reference>
<reference key="3">
    <citation type="journal article" date="2002" name="Science">
        <title>Functional annotation of a full-length Arabidopsis cDNA collection.</title>
        <authorList>
            <person name="Seki M."/>
            <person name="Narusaka M."/>
            <person name="Kamiya A."/>
            <person name="Ishida J."/>
            <person name="Satou M."/>
            <person name="Sakurai T."/>
            <person name="Nakajima M."/>
            <person name="Enju A."/>
            <person name="Akiyama K."/>
            <person name="Oono Y."/>
            <person name="Muramatsu M."/>
            <person name="Hayashizaki Y."/>
            <person name="Kawai J."/>
            <person name="Carninci P."/>
            <person name="Itoh M."/>
            <person name="Ishii Y."/>
            <person name="Arakawa T."/>
            <person name="Shibata K."/>
            <person name="Shinagawa A."/>
            <person name="Shinozaki K."/>
        </authorList>
    </citation>
    <scope>NUCLEOTIDE SEQUENCE [LARGE SCALE MRNA] OF 149-351</scope>
    <source>
        <strain>cv. Columbia</strain>
    </source>
</reference>
<reference key="4">
    <citation type="journal article" date="2003" name="Science">
        <title>Empirical analysis of transcriptional activity in the Arabidopsis genome.</title>
        <authorList>
            <person name="Yamada K."/>
            <person name="Lim J."/>
            <person name="Dale J.M."/>
            <person name="Chen H."/>
            <person name="Shinn P."/>
            <person name="Palm C.J."/>
            <person name="Southwick A.M."/>
            <person name="Wu H.C."/>
            <person name="Kim C.J."/>
            <person name="Nguyen M."/>
            <person name="Pham P.K."/>
            <person name="Cheuk R.F."/>
            <person name="Karlin-Newmann G."/>
            <person name="Liu S.X."/>
            <person name="Lam B."/>
            <person name="Sakano H."/>
            <person name="Wu T."/>
            <person name="Yu G."/>
            <person name="Miranda M."/>
            <person name="Quach H.L."/>
            <person name="Tripp M."/>
            <person name="Chang C.H."/>
            <person name="Lee J.M."/>
            <person name="Toriumi M.J."/>
            <person name="Chan M.M."/>
            <person name="Tang C.C."/>
            <person name="Onodera C.S."/>
            <person name="Deng J.M."/>
            <person name="Akiyama K."/>
            <person name="Ansari Y."/>
            <person name="Arakawa T."/>
            <person name="Banh J."/>
            <person name="Banno F."/>
            <person name="Bowser L."/>
            <person name="Brooks S.Y."/>
            <person name="Carninci P."/>
            <person name="Chao Q."/>
            <person name="Choy N."/>
            <person name="Enju A."/>
            <person name="Goldsmith A.D."/>
            <person name="Gurjal M."/>
            <person name="Hansen N.F."/>
            <person name="Hayashizaki Y."/>
            <person name="Johnson-Hopson C."/>
            <person name="Hsuan V.W."/>
            <person name="Iida K."/>
            <person name="Karnes M."/>
            <person name="Khan S."/>
            <person name="Koesema E."/>
            <person name="Ishida J."/>
            <person name="Jiang P.X."/>
            <person name="Jones T."/>
            <person name="Kawai J."/>
            <person name="Kamiya A."/>
            <person name="Meyers C."/>
            <person name="Nakajima M."/>
            <person name="Narusaka M."/>
            <person name="Seki M."/>
            <person name="Sakurai T."/>
            <person name="Satou M."/>
            <person name="Tamse R."/>
            <person name="Vaysberg M."/>
            <person name="Wallender E.K."/>
            <person name="Wong C."/>
            <person name="Yamamura Y."/>
            <person name="Yuan S."/>
            <person name="Shinozaki K."/>
            <person name="Davis R.W."/>
            <person name="Theologis A."/>
            <person name="Ecker J.R."/>
        </authorList>
    </citation>
    <scope>NUCLEOTIDE SEQUENCE [LARGE SCALE MRNA] OF 189-351</scope>
    <source>
        <strain>cv. Columbia</strain>
    </source>
</reference>
<reference key="5">
    <citation type="journal article" date="2006" name="Proc. Natl. Acad. Sci. U.S.A.">
        <title>Functional identification of an Arabidopsis pectin biosynthetic homogalacturonan galacturonosyltransferase.</title>
        <authorList>
            <person name="Sterling J.D."/>
            <person name="Atmodjo M.A."/>
            <person name="Inwood S.E."/>
            <person name="Kumar Kolli V.S."/>
            <person name="Quigley H.F."/>
            <person name="Hahn M.G."/>
            <person name="Mohnen D."/>
        </authorList>
    </citation>
    <scope>GENE FAMILY</scope>
    <scope>NOMENCLATURE</scope>
</reference>
<reference key="6">
    <citation type="journal article" date="2008" name="Plant Physiol.">
        <title>Galactinol and raffinose constitute a novel function to protect plants from oxidative damage.</title>
        <authorList>
            <person name="Nishizawa A."/>
            <person name="Yabuta Y."/>
            <person name="Shigeoka S."/>
        </authorList>
    </citation>
    <scope>GENE FAMILY</scope>
    <scope>NOMENCLATURE</scope>
</reference>
<sequence length="351" mass="40337">MASRSLSYTQLLGLLSFILLLVTTTTMAVRVGVILHKPSAPTLPVFREAPAFRNGDQCGTREADQIHIAMTLDTNYLRGTMAAVLSLLQHSTCPENLSFHFLSLPHFENDLFTSIKSTFPYLNFKIYQFDPNLVRSKISKSIRQALDQPLNYARIYLADIIPSSVDRIIYLDSDLVVVDDIEKLWHVEMEGKVVAAPEYCHANFTHYFTRTFWSDPVLVKVLEGKRPCYFNTGVMVVDVNKWRKGMYTQKVEEWMTIQKQKRIYHLGSLPPFLLIFAGDIKAVNHRWNQHGLGGDNFEGRCRTLHPGPISLLHWSGKGKPWLRLDSRKPCIVDHLWAPYDLYRSSRHSLEE</sequence>
<gene>
    <name type="primary">GATL4</name>
    <name type="synonym">GOLS9</name>
    <name type="ordered locus">At3g06260</name>
    <name type="ORF">F28L1.20</name>
</gene>
<dbReference type="EC" id="2.4.1.-"/>
<dbReference type="EMBL" id="AC018907">
    <property type="protein sequence ID" value="AAF30319.1"/>
    <property type="molecule type" value="Genomic_DNA"/>
</dbReference>
<dbReference type="EMBL" id="CP002686">
    <property type="protein sequence ID" value="AEE74366.1"/>
    <property type="molecule type" value="Genomic_DNA"/>
</dbReference>
<dbReference type="EMBL" id="BT003687">
    <property type="protein sequence ID" value="AAO39915.1"/>
    <property type="molecule type" value="mRNA"/>
</dbReference>
<dbReference type="EMBL" id="AK118430">
    <property type="protein sequence ID" value="BAC43039.1"/>
    <property type="status" value="ALT_INIT"/>
    <property type="molecule type" value="mRNA"/>
</dbReference>
<dbReference type="RefSeq" id="NP_187277.1">
    <property type="nucleotide sequence ID" value="NM_111501.3"/>
</dbReference>
<dbReference type="SMR" id="Q9M8J2"/>
<dbReference type="BioGRID" id="5135">
    <property type="interactions" value="1"/>
</dbReference>
<dbReference type="FunCoup" id="Q9M8J2">
    <property type="interactions" value="646"/>
</dbReference>
<dbReference type="IntAct" id="Q9M8J2">
    <property type="interactions" value="1"/>
</dbReference>
<dbReference type="STRING" id="3702.Q9M8J2"/>
<dbReference type="CAZy" id="GT8">
    <property type="family name" value="Glycosyltransferase Family 8"/>
</dbReference>
<dbReference type="GlyCosmos" id="Q9M8J2">
    <property type="glycosylation" value="2 sites, No reported glycans"/>
</dbReference>
<dbReference type="GlyGen" id="Q9M8J2">
    <property type="glycosylation" value="2 sites"/>
</dbReference>
<dbReference type="PaxDb" id="3702-AT3G06260.1"/>
<dbReference type="ProteomicsDB" id="230452"/>
<dbReference type="EnsemblPlants" id="AT3G06260.1">
    <property type="protein sequence ID" value="AT3G06260.1"/>
    <property type="gene ID" value="AT3G06260"/>
</dbReference>
<dbReference type="GeneID" id="819800"/>
<dbReference type="Gramene" id="AT3G06260.1">
    <property type="protein sequence ID" value="AT3G06260.1"/>
    <property type="gene ID" value="AT3G06260"/>
</dbReference>
<dbReference type="KEGG" id="ath:AT3G06260"/>
<dbReference type="Araport" id="AT3G06260"/>
<dbReference type="TAIR" id="AT3G06260">
    <property type="gene designation" value="GATL4"/>
</dbReference>
<dbReference type="eggNOG" id="ENOG502QTN8">
    <property type="taxonomic scope" value="Eukaryota"/>
</dbReference>
<dbReference type="HOGENOM" id="CLU_034713_0_0_1"/>
<dbReference type="InParanoid" id="Q9M8J2"/>
<dbReference type="OMA" id="DQCGTRE"/>
<dbReference type="OrthoDB" id="411524at2759"/>
<dbReference type="PhylomeDB" id="Q9M8J2"/>
<dbReference type="UniPathway" id="UPA00845"/>
<dbReference type="PRO" id="PR:Q9M8J2"/>
<dbReference type="Proteomes" id="UP000006548">
    <property type="component" value="Chromosome 3"/>
</dbReference>
<dbReference type="ExpressionAtlas" id="Q9M8J2">
    <property type="expression patterns" value="baseline and differential"/>
</dbReference>
<dbReference type="GO" id="GO:0000139">
    <property type="term" value="C:Golgi membrane"/>
    <property type="evidence" value="ECO:0007669"/>
    <property type="project" value="UniProtKB-SubCell"/>
</dbReference>
<dbReference type="GO" id="GO:0090406">
    <property type="term" value="C:pollen tube"/>
    <property type="evidence" value="ECO:0000314"/>
    <property type="project" value="TAIR"/>
</dbReference>
<dbReference type="GO" id="GO:0047262">
    <property type="term" value="F:polygalacturonate 4-alpha-galacturonosyltransferase activity"/>
    <property type="evidence" value="ECO:0000250"/>
    <property type="project" value="TAIR"/>
</dbReference>
<dbReference type="GO" id="GO:0071555">
    <property type="term" value="P:cell wall organization"/>
    <property type="evidence" value="ECO:0007669"/>
    <property type="project" value="UniProtKB-KW"/>
</dbReference>
<dbReference type="GO" id="GO:0045489">
    <property type="term" value="P:pectin biosynthetic process"/>
    <property type="evidence" value="ECO:0007669"/>
    <property type="project" value="UniProtKB-UniPathway"/>
</dbReference>
<dbReference type="FunFam" id="3.90.550.10:FF:000024">
    <property type="entry name" value="Hexosyltransferase"/>
    <property type="match status" value="1"/>
</dbReference>
<dbReference type="Gene3D" id="3.90.550.10">
    <property type="entry name" value="Spore Coat Polysaccharide Biosynthesis Protein SpsA, Chain A"/>
    <property type="match status" value="1"/>
</dbReference>
<dbReference type="InterPro" id="IPR002495">
    <property type="entry name" value="Glyco_trans_8"/>
</dbReference>
<dbReference type="InterPro" id="IPR050748">
    <property type="entry name" value="Glycosyltrans_8_dom-fam"/>
</dbReference>
<dbReference type="InterPro" id="IPR029044">
    <property type="entry name" value="Nucleotide-diphossugar_trans"/>
</dbReference>
<dbReference type="PANTHER" id="PTHR13778:SF54">
    <property type="entry name" value="GALACTURONOSYLTRANSFERASE-LIKE 4-RELATED"/>
    <property type="match status" value="1"/>
</dbReference>
<dbReference type="PANTHER" id="PTHR13778">
    <property type="entry name" value="GLYCOSYLTRANSFERASE 8 DOMAIN-CONTAINING PROTEIN"/>
    <property type="match status" value="1"/>
</dbReference>
<dbReference type="Pfam" id="PF01501">
    <property type="entry name" value="Glyco_transf_8"/>
    <property type="match status" value="1"/>
</dbReference>
<dbReference type="SUPFAM" id="SSF53448">
    <property type="entry name" value="Nucleotide-diphospho-sugar transferases"/>
    <property type="match status" value="1"/>
</dbReference>
<name>GATL4_ARATH</name>
<evidence type="ECO:0000250" key="1"/>
<evidence type="ECO:0000255" key="2"/>
<evidence type="ECO:0000305" key="3"/>
<organism>
    <name type="scientific">Arabidopsis thaliana</name>
    <name type="common">Mouse-ear cress</name>
    <dbReference type="NCBI Taxonomy" id="3702"/>
    <lineage>
        <taxon>Eukaryota</taxon>
        <taxon>Viridiplantae</taxon>
        <taxon>Streptophyta</taxon>
        <taxon>Embryophyta</taxon>
        <taxon>Tracheophyta</taxon>
        <taxon>Spermatophyta</taxon>
        <taxon>Magnoliopsida</taxon>
        <taxon>eudicotyledons</taxon>
        <taxon>Gunneridae</taxon>
        <taxon>Pentapetalae</taxon>
        <taxon>rosids</taxon>
        <taxon>malvids</taxon>
        <taxon>Brassicales</taxon>
        <taxon>Brassicaceae</taxon>
        <taxon>Camelineae</taxon>
        <taxon>Arabidopsis</taxon>
    </lineage>
</organism>
<keyword id="KW-0961">Cell wall biogenesis/degradation</keyword>
<keyword id="KW-0325">Glycoprotein</keyword>
<keyword id="KW-0328">Glycosyltransferase</keyword>
<keyword id="KW-0333">Golgi apparatus</keyword>
<keyword id="KW-0472">Membrane</keyword>
<keyword id="KW-1185">Reference proteome</keyword>
<keyword id="KW-0735">Signal-anchor</keyword>
<keyword id="KW-0808">Transferase</keyword>
<keyword id="KW-0812">Transmembrane</keyword>
<keyword id="KW-1133">Transmembrane helix</keyword>
<comment type="function">
    <text evidence="1">May be involved in pectin and/or xylans biosynthesis in cell walls.</text>
</comment>
<comment type="pathway">
    <text>Glycan metabolism; pectin biosynthesis.</text>
</comment>
<comment type="subcellular location">
    <subcellularLocation>
        <location evidence="1">Golgi apparatus membrane</location>
        <topology evidence="1">Single-pass type II membrane protein</topology>
    </subcellularLocation>
</comment>
<comment type="similarity">
    <text evidence="3">Belongs to the glycosyltransferase 8 family.</text>
</comment>
<comment type="sequence caution" evidence="3">
    <conflict type="erroneous initiation">
        <sequence resource="EMBL-CDS" id="BAC43039"/>
    </conflict>
    <text>Truncated N-terminus.</text>
</comment>